<feature type="chain" id="PRO_0000248382" description="Ribonuclease H2 subunit B">
    <location>
        <begin position="1"/>
        <end position="306"/>
    </location>
</feature>
<feature type="region of interest" description="Disordered" evidence="2">
    <location>
        <begin position="232"/>
        <end position="285"/>
    </location>
</feature>
<feature type="compositionally biased region" description="Basic and acidic residues" evidence="2">
    <location>
        <begin position="259"/>
        <end position="269"/>
    </location>
</feature>
<keyword id="KW-0539">Nucleus</keyword>
<keyword id="KW-1185">Reference proteome</keyword>
<organism>
    <name type="scientific">Xenopus tropicalis</name>
    <name type="common">Western clawed frog</name>
    <name type="synonym">Silurana tropicalis</name>
    <dbReference type="NCBI Taxonomy" id="8364"/>
    <lineage>
        <taxon>Eukaryota</taxon>
        <taxon>Metazoa</taxon>
        <taxon>Chordata</taxon>
        <taxon>Craniata</taxon>
        <taxon>Vertebrata</taxon>
        <taxon>Euteleostomi</taxon>
        <taxon>Amphibia</taxon>
        <taxon>Batrachia</taxon>
        <taxon>Anura</taxon>
        <taxon>Pipoidea</taxon>
        <taxon>Pipidae</taxon>
        <taxon>Xenopodinae</taxon>
        <taxon>Xenopus</taxon>
        <taxon>Silurana</taxon>
    </lineage>
</organism>
<proteinExistence type="evidence at transcript level"/>
<evidence type="ECO:0000250" key="1"/>
<evidence type="ECO:0000256" key="2">
    <source>
        <dbReference type="SAM" id="MobiDB-lite"/>
    </source>
</evidence>
<evidence type="ECO:0000305" key="3"/>
<name>RNH2B_XENTR</name>
<comment type="function">
    <text evidence="1">Non catalytic subunit of RNase H2, an endonuclease that specifically degrades the RNA of RNA:DNA hybrids. Participates in DNA replication, possibly by mediating the removal of lagging-strand Okazaki fragment RNA primers during DNA replication. Mediates the excision of single ribonucleotides from DNA:RNA duplexes (By similarity).</text>
</comment>
<comment type="subunit">
    <text evidence="1">The RNase H2 complex is a heterotrimer composed of the catalytic subunit rnaseh2a and the non-catalytic subunits rnaseh2b and rnaseh2c.</text>
</comment>
<comment type="subcellular location">
    <subcellularLocation>
        <location evidence="1">Nucleus</location>
    </subcellularLocation>
</comment>
<comment type="similarity">
    <text evidence="3">Belongs to the RNase H2 subunit B family.</text>
</comment>
<gene>
    <name type="primary">rnaseh2b</name>
    <name type="ORF">TEgg013b21.1</name>
</gene>
<protein>
    <recommendedName>
        <fullName>Ribonuclease H2 subunit B</fullName>
        <shortName>RNase H2 subunit B</shortName>
    </recommendedName>
    <alternativeName>
        <fullName>Ribonuclease HI subunit B</fullName>
    </alternativeName>
</protein>
<dbReference type="EMBL" id="CR761427">
    <property type="protein sequence ID" value="CAJ82251.1"/>
    <property type="molecule type" value="mRNA"/>
</dbReference>
<dbReference type="EMBL" id="BC121543">
    <property type="protein sequence ID" value="AAI21544.1"/>
    <property type="molecule type" value="mRNA"/>
</dbReference>
<dbReference type="RefSeq" id="NP_001016329.1">
    <property type="nucleotide sequence ID" value="NM_001016329.2"/>
</dbReference>
<dbReference type="SMR" id="Q28GD9"/>
<dbReference type="FunCoup" id="Q28GD9">
    <property type="interactions" value="1256"/>
</dbReference>
<dbReference type="STRING" id="8364.ENSXETP00000037200"/>
<dbReference type="PaxDb" id="8364-ENSXETP00000044770"/>
<dbReference type="DNASU" id="549083"/>
<dbReference type="GeneID" id="549083"/>
<dbReference type="KEGG" id="xtr:549083"/>
<dbReference type="AGR" id="Xenbase:XB-GENE-1004443"/>
<dbReference type="CTD" id="79621"/>
<dbReference type="Xenbase" id="XB-GENE-1004443">
    <property type="gene designation" value="rnaseh2b"/>
</dbReference>
<dbReference type="eggNOG" id="KOG4705">
    <property type="taxonomic scope" value="Eukaryota"/>
</dbReference>
<dbReference type="HOGENOM" id="CLU_059802_0_0_1"/>
<dbReference type="InParanoid" id="Q28GD9"/>
<dbReference type="OrthoDB" id="29098at2759"/>
<dbReference type="Proteomes" id="UP000008143">
    <property type="component" value="Chromosome 2"/>
</dbReference>
<dbReference type="Bgee" id="ENSXETG00000020720">
    <property type="expression patterns" value="Expressed in testis and 14 other cell types or tissues"/>
</dbReference>
<dbReference type="ExpressionAtlas" id="Q28GD9">
    <property type="expression patterns" value="differential"/>
</dbReference>
<dbReference type="GO" id="GO:0005634">
    <property type="term" value="C:nucleus"/>
    <property type="evidence" value="ECO:0007669"/>
    <property type="project" value="UniProtKB-SubCell"/>
</dbReference>
<dbReference type="GO" id="GO:0032299">
    <property type="term" value="C:ribonuclease H2 complex"/>
    <property type="evidence" value="ECO:0000250"/>
    <property type="project" value="UniProtKB"/>
</dbReference>
<dbReference type="GO" id="GO:0006401">
    <property type="term" value="P:RNA catabolic process"/>
    <property type="evidence" value="ECO:0000250"/>
    <property type="project" value="UniProtKB"/>
</dbReference>
<dbReference type="CDD" id="cd09270">
    <property type="entry name" value="RNase_H2-B"/>
    <property type="match status" value="1"/>
</dbReference>
<dbReference type="FunFam" id="1.10.20.120:FF:000001">
    <property type="entry name" value="Ribonuclease H2 subunit B"/>
    <property type="match status" value="1"/>
</dbReference>
<dbReference type="FunFam" id="2.20.25.530:FF:000001">
    <property type="entry name" value="Ribonuclease H2 subunit B"/>
    <property type="match status" value="1"/>
</dbReference>
<dbReference type="Gene3D" id="1.10.20.120">
    <property type="match status" value="1"/>
</dbReference>
<dbReference type="Gene3D" id="2.20.25.530">
    <property type="match status" value="1"/>
</dbReference>
<dbReference type="InterPro" id="IPR040456">
    <property type="entry name" value="RNase_H2_suB"/>
</dbReference>
<dbReference type="InterPro" id="IPR019024">
    <property type="entry name" value="RNase_H2_suB_wHTH"/>
</dbReference>
<dbReference type="InterPro" id="IPR041195">
    <property type="entry name" value="Rnh202_N"/>
</dbReference>
<dbReference type="PANTHER" id="PTHR13383">
    <property type="entry name" value="RIBONUCLEASE H2 SUBUNIT B"/>
    <property type="match status" value="1"/>
</dbReference>
<dbReference type="PANTHER" id="PTHR13383:SF11">
    <property type="entry name" value="RIBONUCLEASE H2 SUBUNIT B"/>
    <property type="match status" value="1"/>
</dbReference>
<dbReference type="Pfam" id="PF09468">
    <property type="entry name" value="RNase_H2-Ydr279"/>
    <property type="match status" value="1"/>
</dbReference>
<dbReference type="Pfam" id="PF17745">
    <property type="entry name" value="Ydr279_N"/>
    <property type="match status" value="1"/>
</dbReference>
<accession>Q28GD9</accession>
<accession>Q0IIW0</accession>
<sequence>MVSRRQRPGSGQSEQWVLLAPESLSDDAKNLSDKTIFAKLRAPCTDKGSMFLFIDSGQQICEVKAFHEEYRSWFIGQTVQQDGRLLIATPIDPMFLVLHYLIKADKEQGKFQPVEQIVVDEEFPSCSMLLQCTPVSKSLHHVTEEKEIGSKKFYKYSKEKTLVWLKKKVELTVKVLKSSNICVGGGVQSATFIRNTQGSDVKEEDYTRYAHGLISEYLTEDLREDLSKYLGLPDLSSPTPEPPVKKRKVSEAPVEAEEDYTKFNSDSKNKKSNSKMTAAQKSLAKVDKSGMKNISAFFSPKAKATK</sequence>
<reference key="1">
    <citation type="submission" date="2006-06" db="EMBL/GenBank/DDBJ databases">
        <authorList>
            <consortium name="Sanger Xenopus tropicalis EST/cDNA project"/>
        </authorList>
    </citation>
    <scope>NUCLEOTIDE SEQUENCE [LARGE SCALE MRNA]</scope>
    <source>
        <tissue>Egg</tissue>
    </source>
</reference>
<reference key="2">
    <citation type="submission" date="2006-08" db="EMBL/GenBank/DDBJ databases">
        <authorList>
            <consortium name="NIH - Xenopus Gene Collection (XGC) project"/>
        </authorList>
    </citation>
    <scope>NUCLEOTIDE SEQUENCE [LARGE SCALE MRNA]</scope>
    <source>
        <strain>N6</strain>
        <tissue>Oviduct</tissue>
    </source>
</reference>